<comment type="function">
    <text evidence="1">Catalyzes the ATP-dependent phosphorylation of N-acetyl-L-glutamate.</text>
</comment>
<comment type="catalytic activity">
    <reaction evidence="1">
        <text>N-acetyl-L-glutamate + ATP = N-acetyl-L-glutamyl 5-phosphate + ADP</text>
        <dbReference type="Rhea" id="RHEA:14629"/>
        <dbReference type="ChEBI" id="CHEBI:30616"/>
        <dbReference type="ChEBI" id="CHEBI:44337"/>
        <dbReference type="ChEBI" id="CHEBI:57936"/>
        <dbReference type="ChEBI" id="CHEBI:456216"/>
        <dbReference type="EC" id="2.7.2.8"/>
    </reaction>
</comment>
<comment type="pathway">
    <text evidence="1">Amino-acid biosynthesis; L-arginine biosynthesis; N(2)-acetyl-L-ornithine from L-glutamate: step 2/4.</text>
</comment>
<comment type="subunit">
    <text evidence="1">Homodimer.</text>
</comment>
<comment type="subcellular location">
    <subcellularLocation>
        <location evidence="1">Cytoplasm</location>
    </subcellularLocation>
</comment>
<comment type="similarity">
    <text evidence="1">Belongs to the acetylglutamate kinase family. ArgB subfamily.</text>
</comment>
<protein>
    <recommendedName>
        <fullName evidence="1">Acetylglutamate kinase</fullName>
        <ecNumber evidence="1">2.7.2.8</ecNumber>
    </recommendedName>
    <alternativeName>
        <fullName evidence="1">N-acetyl-L-glutamate 5-phosphotransferase</fullName>
    </alternativeName>
    <alternativeName>
        <fullName evidence="1">NAG kinase</fullName>
        <shortName evidence="1">NAGK</shortName>
    </alternativeName>
</protein>
<proteinExistence type="inferred from homology"/>
<dbReference type="EC" id="2.7.2.8" evidence="1"/>
<dbReference type="EMBL" id="CP001120">
    <property type="protein sequence ID" value="ACF67299.1"/>
    <property type="molecule type" value="Genomic_DNA"/>
</dbReference>
<dbReference type="SMR" id="B4TCQ5"/>
<dbReference type="KEGG" id="seh:SeHA_C4450"/>
<dbReference type="HOGENOM" id="CLU_053680_1_1_6"/>
<dbReference type="UniPathway" id="UPA00068">
    <property type="reaction ID" value="UER00107"/>
</dbReference>
<dbReference type="Proteomes" id="UP000001866">
    <property type="component" value="Chromosome"/>
</dbReference>
<dbReference type="GO" id="GO:0005737">
    <property type="term" value="C:cytoplasm"/>
    <property type="evidence" value="ECO:0007669"/>
    <property type="project" value="UniProtKB-SubCell"/>
</dbReference>
<dbReference type="GO" id="GO:0003991">
    <property type="term" value="F:acetylglutamate kinase activity"/>
    <property type="evidence" value="ECO:0007669"/>
    <property type="project" value="UniProtKB-UniRule"/>
</dbReference>
<dbReference type="GO" id="GO:0005524">
    <property type="term" value="F:ATP binding"/>
    <property type="evidence" value="ECO:0007669"/>
    <property type="project" value="UniProtKB-UniRule"/>
</dbReference>
<dbReference type="GO" id="GO:0042450">
    <property type="term" value="P:arginine biosynthetic process via ornithine"/>
    <property type="evidence" value="ECO:0007669"/>
    <property type="project" value="UniProtKB-UniRule"/>
</dbReference>
<dbReference type="GO" id="GO:0006526">
    <property type="term" value="P:L-arginine biosynthetic process"/>
    <property type="evidence" value="ECO:0007669"/>
    <property type="project" value="UniProtKB-UniPathway"/>
</dbReference>
<dbReference type="CDD" id="cd04249">
    <property type="entry name" value="AAK_NAGK-NC"/>
    <property type="match status" value="1"/>
</dbReference>
<dbReference type="FunFam" id="3.40.1160.10:FF:000008">
    <property type="entry name" value="Acetylglutamate kinase"/>
    <property type="match status" value="1"/>
</dbReference>
<dbReference type="Gene3D" id="3.40.1160.10">
    <property type="entry name" value="Acetylglutamate kinase-like"/>
    <property type="match status" value="1"/>
</dbReference>
<dbReference type="HAMAP" id="MF_00082">
    <property type="entry name" value="ArgB"/>
    <property type="match status" value="1"/>
</dbReference>
<dbReference type="InterPro" id="IPR036393">
    <property type="entry name" value="AceGlu_kinase-like_sf"/>
</dbReference>
<dbReference type="InterPro" id="IPR004662">
    <property type="entry name" value="AcgluKinase_fam"/>
</dbReference>
<dbReference type="InterPro" id="IPR037528">
    <property type="entry name" value="ArgB"/>
</dbReference>
<dbReference type="InterPro" id="IPR001048">
    <property type="entry name" value="Asp/Glu/Uridylate_kinase"/>
</dbReference>
<dbReference type="InterPro" id="IPR041731">
    <property type="entry name" value="NAGK-NC"/>
</dbReference>
<dbReference type="NCBIfam" id="TIGR00761">
    <property type="entry name" value="argB"/>
    <property type="match status" value="1"/>
</dbReference>
<dbReference type="PANTHER" id="PTHR23342">
    <property type="entry name" value="N-ACETYLGLUTAMATE SYNTHASE"/>
    <property type="match status" value="1"/>
</dbReference>
<dbReference type="PANTHER" id="PTHR23342:SF0">
    <property type="entry name" value="N-ACETYLGLUTAMATE SYNTHASE, MITOCHONDRIAL"/>
    <property type="match status" value="1"/>
</dbReference>
<dbReference type="Pfam" id="PF00696">
    <property type="entry name" value="AA_kinase"/>
    <property type="match status" value="1"/>
</dbReference>
<dbReference type="PIRSF" id="PIRSF000728">
    <property type="entry name" value="NAGK"/>
    <property type="match status" value="1"/>
</dbReference>
<dbReference type="SUPFAM" id="SSF53633">
    <property type="entry name" value="Carbamate kinase-like"/>
    <property type="match status" value="1"/>
</dbReference>
<name>ARGB_SALHS</name>
<organism>
    <name type="scientific">Salmonella heidelberg (strain SL476)</name>
    <dbReference type="NCBI Taxonomy" id="454169"/>
    <lineage>
        <taxon>Bacteria</taxon>
        <taxon>Pseudomonadati</taxon>
        <taxon>Pseudomonadota</taxon>
        <taxon>Gammaproteobacteria</taxon>
        <taxon>Enterobacterales</taxon>
        <taxon>Enterobacteriaceae</taxon>
        <taxon>Salmonella</taxon>
    </lineage>
</organism>
<sequence length="257" mass="26876">MNPLIIKLGGVLLDSEEALERLFTALVNYRESHQRPLVIVHGGGCVVDELMKGLNLPVKKKDGLRVTPADQIGIITGALAGTANKTLLAWAKKHHIASVGLFLGDGDSVNVTQLDEALGHVGLAQPGSPKLINMLLENGFLPVVSSIGVTDDGQLMNVNADQAATALAATLGADLILLSDVSGILDGKGQRIAEMTASKAEQLIDQGIITDGMIVKVNAALDAARALGRPVDIASWRHAEQLPALFNGTPIGTRILA</sequence>
<evidence type="ECO:0000255" key="1">
    <source>
        <dbReference type="HAMAP-Rule" id="MF_00082"/>
    </source>
</evidence>
<feature type="chain" id="PRO_1000092882" description="Acetylglutamate kinase">
    <location>
        <begin position="1"/>
        <end position="257"/>
    </location>
</feature>
<feature type="binding site" evidence="1">
    <location>
        <begin position="43"/>
        <end position="44"/>
    </location>
    <ligand>
        <name>substrate</name>
    </ligand>
</feature>
<feature type="binding site" evidence="1">
    <location>
        <position position="65"/>
    </location>
    <ligand>
        <name>substrate</name>
    </ligand>
</feature>
<feature type="binding site" evidence="1">
    <location>
        <position position="157"/>
    </location>
    <ligand>
        <name>substrate</name>
    </ligand>
</feature>
<feature type="binding site" evidence="1">
    <location>
        <begin position="180"/>
        <end position="185"/>
    </location>
    <ligand>
        <name>ATP</name>
        <dbReference type="ChEBI" id="CHEBI:30616"/>
    </ligand>
</feature>
<feature type="binding site" evidence="1">
    <location>
        <begin position="208"/>
        <end position="210"/>
    </location>
    <ligand>
        <name>ATP</name>
        <dbReference type="ChEBI" id="CHEBI:30616"/>
    </ligand>
</feature>
<feature type="site" description="Transition state stabilizer" evidence="1">
    <location>
        <position position="7"/>
    </location>
</feature>
<feature type="site" description="Transition state stabilizer" evidence="1">
    <location>
        <position position="216"/>
    </location>
</feature>
<accession>B4TCQ5</accession>
<keyword id="KW-0028">Amino-acid biosynthesis</keyword>
<keyword id="KW-0055">Arginine biosynthesis</keyword>
<keyword id="KW-0067">ATP-binding</keyword>
<keyword id="KW-0963">Cytoplasm</keyword>
<keyword id="KW-0418">Kinase</keyword>
<keyword id="KW-0547">Nucleotide-binding</keyword>
<keyword id="KW-0808">Transferase</keyword>
<reference key="1">
    <citation type="journal article" date="2011" name="J. Bacteriol.">
        <title>Comparative genomics of 28 Salmonella enterica isolates: evidence for CRISPR-mediated adaptive sublineage evolution.</title>
        <authorList>
            <person name="Fricke W.F."/>
            <person name="Mammel M.K."/>
            <person name="McDermott P.F."/>
            <person name="Tartera C."/>
            <person name="White D.G."/>
            <person name="Leclerc J.E."/>
            <person name="Ravel J."/>
            <person name="Cebula T.A."/>
        </authorList>
    </citation>
    <scope>NUCLEOTIDE SEQUENCE [LARGE SCALE GENOMIC DNA]</scope>
    <source>
        <strain>SL476</strain>
    </source>
</reference>
<gene>
    <name evidence="1" type="primary">argB</name>
    <name type="ordered locus">SeHA_C4450</name>
</gene>